<comment type="function">
    <text evidence="1">Phosphatase that hydrolyzes non-canonical purine nucleotides such as XTP and ITP to their respective diphosphate derivatives. Probably excludes non-canonical purines from DNA/RNA precursor pool, thus preventing their incorporation into DNA/RNA and avoiding chromosomal lesions.</text>
</comment>
<comment type="catalytic activity">
    <reaction evidence="1">
        <text>XTP + H2O = XDP + phosphate + H(+)</text>
        <dbReference type="Rhea" id="RHEA:28406"/>
        <dbReference type="ChEBI" id="CHEBI:15377"/>
        <dbReference type="ChEBI" id="CHEBI:15378"/>
        <dbReference type="ChEBI" id="CHEBI:43474"/>
        <dbReference type="ChEBI" id="CHEBI:59884"/>
        <dbReference type="ChEBI" id="CHEBI:61314"/>
        <dbReference type="EC" id="3.6.1.73"/>
    </reaction>
</comment>
<comment type="catalytic activity">
    <reaction evidence="1">
        <text>ITP + H2O = IDP + phosphate + H(+)</text>
        <dbReference type="Rhea" id="RHEA:28330"/>
        <dbReference type="ChEBI" id="CHEBI:15377"/>
        <dbReference type="ChEBI" id="CHEBI:15378"/>
        <dbReference type="ChEBI" id="CHEBI:43474"/>
        <dbReference type="ChEBI" id="CHEBI:58280"/>
        <dbReference type="ChEBI" id="CHEBI:61402"/>
        <dbReference type="EC" id="3.6.1.73"/>
    </reaction>
</comment>
<comment type="cofactor">
    <cofactor evidence="1">
        <name>Mg(2+)</name>
        <dbReference type="ChEBI" id="CHEBI:18420"/>
    </cofactor>
    <cofactor evidence="1">
        <name>Mn(2+)</name>
        <dbReference type="ChEBI" id="CHEBI:29035"/>
    </cofactor>
    <text evidence="1">Binds 1 divalent metal cation per subunit; can use either Mg(2+) or Mn(2+).</text>
</comment>
<comment type="subunit">
    <text evidence="1">Homodimer.</text>
</comment>
<comment type="similarity">
    <text evidence="1">Belongs to the YjjX NTPase family.</text>
</comment>
<sequence>MHQVISATTNPAKIQAILQAFEEIFGEGSCHITPVAVESGVPEQPFGSEETRAGARNRVGNARRLHPQADFWVAIEAGIDDDATFSWVVIDNGVQRGEARSATLPLPAVILDRVRQGEALGPVMSQYTGIDEIGRKEGAIGVFTAGKLTRSSVYYQAVILALSPFHNAVYR</sequence>
<protein>
    <recommendedName>
        <fullName evidence="1">Inosine/xanthosine triphosphatase</fullName>
        <shortName evidence="1">ITPase/XTPase</shortName>
        <ecNumber evidence="1">3.6.1.73</ecNumber>
    </recommendedName>
    <alternativeName>
        <fullName evidence="1">Non-canonical purine NTP phosphatase</fullName>
    </alternativeName>
    <alternativeName>
        <fullName evidence="1">Non-standard purine NTP phosphatase</fullName>
    </alternativeName>
    <alternativeName>
        <fullName evidence="1">Nucleoside-triphosphate phosphatase</fullName>
        <shortName evidence="1">NTPase</shortName>
    </alternativeName>
</protein>
<organism>
    <name type="scientific">Salmonella paratyphi A (strain ATCC 9150 / SARB42)</name>
    <dbReference type="NCBI Taxonomy" id="295319"/>
    <lineage>
        <taxon>Bacteria</taxon>
        <taxon>Pseudomonadati</taxon>
        <taxon>Pseudomonadota</taxon>
        <taxon>Gammaproteobacteria</taxon>
        <taxon>Enterobacterales</taxon>
        <taxon>Enterobacteriaceae</taxon>
        <taxon>Salmonella</taxon>
    </lineage>
</organism>
<gene>
    <name type="primary">yjjX</name>
    <name type="ordered locus">SPA4394</name>
</gene>
<keyword id="KW-0378">Hydrolase</keyword>
<keyword id="KW-0460">Magnesium</keyword>
<keyword id="KW-0464">Manganese</keyword>
<keyword id="KW-0479">Metal-binding</keyword>
<keyword id="KW-0546">Nucleotide metabolism</keyword>
<keyword id="KW-0547">Nucleotide-binding</keyword>
<evidence type="ECO:0000255" key="1">
    <source>
        <dbReference type="HAMAP-Rule" id="MF_00648"/>
    </source>
</evidence>
<name>NCPP_SALPA</name>
<accession>Q5PK30</accession>
<reference key="1">
    <citation type="journal article" date="2004" name="Nat. Genet.">
        <title>Comparison of genome degradation in Paratyphi A and Typhi, human-restricted serovars of Salmonella enterica that cause typhoid.</title>
        <authorList>
            <person name="McClelland M."/>
            <person name="Sanderson K.E."/>
            <person name="Clifton S.W."/>
            <person name="Latreille P."/>
            <person name="Porwollik S."/>
            <person name="Sabo A."/>
            <person name="Meyer R."/>
            <person name="Bieri T."/>
            <person name="Ozersky P."/>
            <person name="McLellan M."/>
            <person name="Harkins C.R."/>
            <person name="Wang C."/>
            <person name="Nguyen C."/>
            <person name="Berghoff A."/>
            <person name="Elliott G."/>
            <person name="Kohlberg S."/>
            <person name="Strong C."/>
            <person name="Du F."/>
            <person name="Carter J."/>
            <person name="Kremizki C."/>
            <person name="Layman D."/>
            <person name="Leonard S."/>
            <person name="Sun H."/>
            <person name="Fulton L."/>
            <person name="Nash W."/>
            <person name="Miner T."/>
            <person name="Minx P."/>
            <person name="Delehaunty K."/>
            <person name="Fronick C."/>
            <person name="Magrini V."/>
            <person name="Nhan M."/>
            <person name="Warren W."/>
            <person name="Florea L."/>
            <person name="Spieth J."/>
            <person name="Wilson R.K."/>
        </authorList>
    </citation>
    <scope>NUCLEOTIDE SEQUENCE [LARGE SCALE GENOMIC DNA]</scope>
    <source>
        <strain>ATCC 9150 / SARB42</strain>
    </source>
</reference>
<feature type="chain" id="PRO_0000156347" description="Inosine/xanthosine triphosphatase">
    <location>
        <begin position="1"/>
        <end position="171"/>
    </location>
</feature>
<feature type="binding site" evidence="1">
    <location>
        <begin position="8"/>
        <end position="13"/>
    </location>
    <ligand>
        <name>substrate</name>
    </ligand>
</feature>
<feature type="binding site" evidence="1">
    <location>
        <position position="38"/>
    </location>
    <ligand>
        <name>Mg(2+)</name>
        <dbReference type="ChEBI" id="CHEBI:18420"/>
    </ligand>
</feature>
<feature type="binding site" evidence="1">
    <location>
        <position position="68"/>
    </location>
    <ligand>
        <name>Mg(2+)</name>
        <dbReference type="ChEBI" id="CHEBI:18420"/>
    </ligand>
</feature>
<dbReference type="EC" id="3.6.1.73" evidence="1"/>
<dbReference type="EMBL" id="CP000026">
    <property type="protein sequence ID" value="AAV80117.1"/>
    <property type="molecule type" value="Genomic_DNA"/>
</dbReference>
<dbReference type="RefSeq" id="WP_000554315.1">
    <property type="nucleotide sequence ID" value="NC_006511.1"/>
</dbReference>
<dbReference type="SMR" id="Q5PK30"/>
<dbReference type="KEGG" id="spt:SPA4394"/>
<dbReference type="HOGENOM" id="CLU_087417_1_0_6"/>
<dbReference type="Proteomes" id="UP000008185">
    <property type="component" value="Chromosome"/>
</dbReference>
<dbReference type="GO" id="GO:0103023">
    <property type="term" value="F:ITPase activity"/>
    <property type="evidence" value="ECO:0007669"/>
    <property type="project" value="UniProtKB-EC"/>
</dbReference>
<dbReference type="GO" id="GO:0046872">
    <property type="term" value="F:metal ion binding"/>
    <property type="evidence" value="ECO:0007669"/>
    <property type="project" value="UniProtKB-KW"/>
</dbReference>
<dbReference type="GO" id="GO:0000166">
    <property type="term" value="F:nucleotide binding"/>
    <property type="evidence" value="ECO:0007669"/>
    <property type="project" value="UniProtKB-KW"/>
</dbReference>
<dbReference type="GO" id="GO:0017111">
    <property type="term" value="F:ribonucleoside triphosphate phosphatase activity"/>
    <property type="evidence" value="ECO:0000250"/>
    <property type="project" value="UniProtKB"/>
</dbReference>
<dbReference type="GO" id="GO:0009117">
    <property type="term" value="P:nucleotide metabolic process"/>
    <property type="evidence" value="ECO:0007669"/>
    <property type="project" value="UniProtKB-KW"/>
</dbReference>
<dbReference type="GO" id="GO:0006772">
    <property type="term" value="P:thiamine metabolic process"/>
    <property type="evidence" value="ECO:0007669"/>
    <property type="project" value="TreeGrafter"/>
</dbReference>
<dbReference type="FunFam" id="3.90.950.10:FF:000002">
    <property type="entry name" value="Inosine/xanthosine triphosphatase"/>
    <property type="match status" value="1"/>
</dbReference>
<dbReference type="Gene3D" id="3.90.950.10">
    <property type="match status" value="1"/>
</dbReference>
<dbReference type="HAMAP" id="MF_00648">
    <property type="entry name" value="Non_canon_purine_NTPase_YjjX"/>
    <property type="match status" value="1"/>
</dbReference>
<dbReference type="InterPro" id="IPR029001">
    <property type="entry name" value="ITPase-like_fam"/>
</dbReference>
<dbReference type="InterPro" id="IPR002786">
    <property type="entry name" value="Non_canon_purine_NTPase"/>
</dbReference>
<dbReference type="InterPro" id="IPR026533">
    <property type="entry name" value="NTPase/PRRC1"/>
</dbReference>
<dbReference type="InterPro" id="IPR050299">
    <property type="entry name" value="YjjX_NTPase"/>
</dbReference>
<dbReference type="NCBIfam" id="TIGR00258">
    <property type="entry name" value="inosine/xanthosine triphosphatase"/>
    <property type="match status" value="1"/>
</dbReference>
<dbReference type="NCBIfam" id="NF003459">
    <property type="entry name" value="PRK05074.1"/>
    <property type="match status" value="1"/>
</dbReference>
<dbReference type="PANTHER" id="PTHR34699">
    <property type="match status" value="1"/>
</dbReference>
<dbReference type="PANTHER" id="PTHR34699:SF2">
    <property type="entry name" value="NON-CANONICAL PURINE NTP PHOSPHATASE_PRRC1 DOMAIN-CONTAINING PROTEIN"/>
    <property type="match status" value="1"/>
</dbReference>
<dbReference type="Pfam" id="PF01931">
    <property type="entry name" value="NTPase_I-T"/>
    <property type="match status" value="1"/>
</dbReference>
<dbReference type="SUPFAM" id="SSF52972">
    <property type="entry name" value="ITPase-like"/>
    <property type="match status" value="1"/>
</dbReference>
<proteinExistence type="inferred from homology"/>